<protein>
    <recommendedName>
        <fullName evidence="1">Adenylate kinase</fullName>
        <shortName evidence="1">AK</shortName>
        <ecNumber evidence="1">2.7.4.3</ecNumber>
    </recommendedName>
    <alternativeName>
        <fullName evidence="1">ATP-AMP transphosphorylase</fullName>
    </alternativeName>
    <alternativeName>
        <fullName evidence="1">ATP:AMP phosphotransferase</fullName>
    </alternativeName>
    <alternativeName>
        <fullName evidence="1">Adenylate monophosphate kinase</fullName>
    </alternativeName>
</protein>
<sequence>MKIIMLGAPGAGKGTQAKKIAEKYKIPHISTGDIFRANIKNNTELGAKAKEYMDQGLLVPDEITLDMVMDRFAQDDCKNGYVLDGFPRTIPQAEALNKALVEEGEQIDYAINIEVPDELIVSRMSGRRACVSCGGTYHVVFTPTKKEGICDACGGELTIRDDDKPETVAKRLNVYHNQTQPLINYYHGLGLLEEVDGTKEALEVFEDIIGILGKVAQ</sequence>
<organism>
    <name type="scientific">Lachnoclostridium phytofermentans (strain ATCC 700394 / DSM 18823 / ISDg)</name>
    <name type="common">Clostridium phytofermentans</name>
    <dbReference type="NCBI Taxonomy" id="357809"/>
    <lineage>
        <taxon>Bacteria</taxon>
        <taxon>Bacillati</taxon>
        <taxon>Bacillota</taxon>
        <taxon>Clostridia</taxon>
        <taxon>Lachnospirales</taxon>
        <taxon>Lachnospiraceae</taxon>
    </lineage>
</organism>
<dbReference type="EC" id="2.7.4.3" evidence="1"/>
<dbReference type="EMBL" id="CP000885">
    <property type="protein sequence ID" value="ABX43993.1"/>
    <property type="molecule type" value="Genomic_DNA"/>
</dbReference>
<dbReference type="RefSeq" id="WP_012201641.1">
    <property type="nucleotide sequence ID" value="NC_010001.1"/>
</dbReference>
<dbReference type="SMR" id="A9KJH3"/>
<dbReference type="STRING" id="357809.Cphy_3646"/>
<dbReference type="KEGG" id="cpy:Cphy_3646"/>
<dbReference type="eggNOG" id="COG0563">
    <property type="taxonomic scope" value="Bacteria"/>
</dbReference>
<dbReference type="HOGENOM" id="CLU_032354_1_2_9"/>
<dbReference type="OrthoDB" id="9805030at2"/>
<dbReference type="UniPathway" id="UPA00588">
    <property type="reaction ID" value="UER00649"/>
</dbReference>
<dbReference type="Proteomes" id="UP000000370">
    <property type="component" value="Chromosome"/>
</dbReference>
<dbReference type="GO" id="GO:0005737">
    <property type="term" value="C:cytoplasm"/>
    <property type="evidence" value="ECO:0007669"/>
    <property type="project" value="UniProtKB-SubCell"/>
</dbReference>
<dbReference type="GO" id="GO:0004017">
    <property type="term" value="F:adenylate kinase activity"/>
    <property type="evidence" value="ECO:0007669"/>
    <property type="project" value="UniProtKB-UniRule"/>
</dbReference>
<dbReference type="GO" id="GO:0005524">
    <property type="term" value="F:ATP binding"/>
    <property type="evidence" value="ECO:0007669"/>
    <property type="project" value="UniProtKB-UniRule"/>
</dbReference>
<dbReference type="GO" id="GO:0008270">
    <property type="term" value="F:zinc ion binding"/>
    <property type="evidence" value="ECO:0007669"/>
    <property type="project" value="UniProtKB-UniRule"/>
</dbReference>
<dbReference type="GO" id="GO:0044209">
    <property type="term" value="P:AMP salvage"/>
    <property type="evidence" value="ECO:0007669"/>
    <property type="project" value="UniProtKB-UniRule"/>
</dbReference>
<dbReference type="CDD" id="cd01428">
    <property type="entry name" value="ADK"/>
    <property type="match status" value="1"/>
</dbReference>
<dbReference type="FunFam" id="3.40.50.300:FF:000106">
    <property type="entry name" value="Adenylate kinase mitochondrial"/>
    <property type="match status" value="1"/>
</dbReference>
<dbReference type="Gene3D" id="3.40.50.300">
    <property type="entry name" value="P-loop containing nucleotide triphosphate hydrolases"/>
    <property type="match status" value="1"/>
</dbReference>
<dbReference type="HAMAP" id="MF_00235">
    <property type="entry name" value="Adenylate_kinase_Adk"/>
    <property type="match status" value="1"/>
</dbReference>
<dbReference type="InterPro" id="IPR006259">
    <property type="entry name" value="Adenyl_kin_sub"/>
</dbReference>
<dbReference type="InterPro" id="IPR000850">
    <property type="entry name" value="Adenylat/UMP-CMP_kin"/>
</dbReference>
<dbReference type="InterPro" id="IPR033690">
    <property type="entry name" value="Adenylat_kinase_CS"/>
</dbReference>
<dbReference type="InterPro" id="IPR007862">
    <property type="entry name" value="Adenylate_kinase_lid-dom"/>
</dbReference>
<dbReference type="InterPro" id="IPR027417">
    <property type="entry name" value="P-loop_NTPase"/>
</dbReference>
<dbReference type="NCBIfam" id="TIGR01351">
    <property type="entry name" value="adk"/>
    <property type="match status" value="1"/>
</dbReference>
<dbReference type="NCBIfam" id="NF001379">
    <property type="entry name" value="PRK00279.1-1"/>
    <property type="match status" value="1"/>
</dbReference>
<dbReference type="NCBIfam" id="NF001380">
    <property type="entry name" value="PRK00279.1-2"/>
    <property type="match status" value="1"/>
</dbReference>
<dbReference type="NCBIfam" id="NF001381">
    <property type="entry name" value="PRK00279.1-3"/>
    <property type="match status" value="1"/>
</dbReference>
<dbReference type="NCBIfam" id="NF011100">
    <property type="entry name" value="PRK14527.1"/>
    <property type="match status" value="1"/>
</dbReference>
<dbReference type="PANTHER" id="PTHR23359">
    <property type="entry name" value="NUCLEOTIDE KINASE"/>
    <property type="match status" value="1"/>
</dbReference>
<dbReference type="Pfam" id="PF00406">
    <property type="entry name" value="ADK"/>
    <property type="match status" value="1"/>
</dbReference>
<dbReference type="Pfam" id="PF05191">
    <property type="entry name" value="ADK_lid"/>
    <property type="match status" value="1"/>
</dbReference>
<dbReference type="PRINTS" id="PR00094">
    <property type="entry name" value="ADENYLTKNASE"/>
</dbReference>
<dbReference type="SUPFAM" id="SSF52540">
    <property type="entry name" value="P-loop containing nucleoside triphosphate hydrolases"/>
    <property type="match status" value="1"/>
</dbReference>
<dbReference type="PROSITE" id="PS00113">
    <property type="entry name" value="ADENYLATE_KINASE"/>
    <property type="match status" value="1"/>
</dbReference>
<accession>A9KJH3</accession>
<comment type="function">
    <text evidence="1">Catalyzes the reversible transfer of the terminal phosphate group between ATP and AMP. Plays an important role in cellular energy homeostasis and in adenine nucleotide metabolism.</text>
</comment>
<comment type="catalytic activity">
    <reaction evidence="1">
        <text>AMP + ATP = 2 ADP</text>
        <dbReference type="Rhea" id="RHEA:12973"/>
        <dbReference type="ChEBI" id="CHEBI:30616"/>
        <dbReference type="ChEBI" id="CHEBI:456215"/>
        <dbReference type="ChEBI" id="CHEBI:456216"/>
        <dbReference type="EC" id="2.7.4.3"/>
    </reaction>
</comment>
<comment type="pathway">
    <text evidence="1">Purine metabolism; AMP biosynthesis via salvage pathway; AMP from ADP: step 1/1.</text>
</comment>
<comment type="subunit">
    <text evidence="1">Monomer.</text>
</comment>
<comment type="subcellular location">
    <subcellularLocation>
        <location evidence="1">Cytoplasm</location>
    </subcellularLocation>
</comment>
<comment type="domain">
    <text evidence="1">Consists of three domains, a large central CORE domain and two small peripheral domains, NMPbind and LID, which undergo movements during catalysis. The LID domain closes over the site of phosphoryl transfer upon ATP binding. Assembling and dissambling the active center during each catalytic cycle provides an effective means to prevent ATP hydrolysis. Some bacteria have evolved a zinc-coordinating structure that stabilizes the LID domain.</text>
</comment>
<comment type="similarity">
    <text evidence="1">Belongs to the adenylate kinase family.</text>
</comment>
<keyword id="KW-0067">ATP-binding</keyword>
<keyword id="KW-0963">Cytoplasm</keyword>
<keyword id="KW-0418">Kinase</keyword>
<keyword id="KW-0479">Metal-binding</keyword>
<keyword id="KW-0545">Nucleotide biosynthesis</keyword>
<keyword id="KW-0547">Nucleotide-binding</keyword>
<keyword id="KW-1185">Reference proteome</keyword>
<keyword id="KW-0808">Transferase</keyword>
<keyword id="KW-0862">Zinc</keyword>
<name>KAD_LACP7</name>
<gene>
    <name evidence="1" type="primary">adk</name>
    <name type="ordered locus">Cphy_3646</name>
</gene>
<reference key="1">
    <citation type="submission" date="2007-11" db="EMBL/GenBank/DDBJ databases">
        <title>Complete genome sequence of Clostridium phytofermentans ISDg.</title>
        <authorList>
            <person name="Leschine S.B."/>
            <person name="Warnick T.A."/>
            <person name="Blanchard J.L."/>
            <person name="Schnell D.J."/>
            <person name="Petit E.L."/>
            <person name="LaTouf W.G."/>
            <person name="Copeland A."/>
            <person name="Lucas S."/>
            <person name="Lapidus A."/>
            <person name="Barry K."/>
            <person name="Glavina del Rio T."/>
            <person name="Dalin E."/>
            <person name="Tice H."/>
            <person name="Pitluck S."/>
            <person name="Kiss H."/>
            <person name="Brettin T."/>
            <person name="Bruce D."/>
            <person name="Detter J.C."/>
            <person name="Han C."/>
            <person name="Kuske C."/>
            <person name="Schmutz J."/>
            <person name="Larimer F."/>
            <person name="Land M."/>
            <person name="Hauser L."/>
            <person name="Kyrpides N."/>
            <person name="Kim E.A."/>
            <person name="Richardson P."/>
        </authorList>
    </citation>
    <scope>NUCLEOTIDE SEQUENCE [LARGE SCALE GENOMIC DNA]</scope>
    <source>
        <strain>ATCC 700394 / DSM 18823 / ISDg</strain>
    </source>
</reference>
<evidence type="ECO:0000255" key="1">
    <source>
        <dbReference type="HAMAP-Rule" id="MF_00235"/>
    </source>
</evidence>
<proteinExistence type="inferred from homology"/>
<feature type="chain" id="PRO_1000078269" description="Adenylate kinase">
    <location>
        <begin position="1"/>
        <end position="217"/>
    </location>
</feature>
<feature type="region of interest" description="NMP" evidence="1">
    <location>
        <begin position="30"/>
        <end position="59"/>
    </location>
</feature>
<feature type="region of interest" description="LID" evidence="1">
    <location>
        <begin position="126"/>
        <end position="163"/>
    </location>
</feature>
<feature type="binding site" evidence="1">
    <location>
        <begin position="10"/>
        <end position="15"/>
    </location>
    <ligand>
        <name>ATP</name>
        <dbReference type="ChEBI" id="CHEBI:30616"/>
    </ligand>
</feature>
<feature type="binding site" evidence="1">
    <location>
        <position position="31"/>
    </location>
    <ligand>
        <name>AMP</name>
        <dbReference type="ChEBI" id="CHEBI:456215"/>
    </ligand>
</feature>
<feature type="binding site" evidence="1">
    <location>
        <position position="36"/>
    </location>
    <ligand>
        <name>AMP</name>
        <dbReference type="ChEBI" id="CHEBI:456215"/>
    </ligand>
</feature>
<feature type="binding site" evidence="1">
    <location>
        <begin position="57"/>
        <end position="59"/>
    </location>
    <ligand>
        <name>AMP</name>
        <dbReference type="ChEBI" id="CHEBI:456215"/>
    </ligand>
</feature>
<feature type="binding site" evidence="1">
    <location>
        <begin position="85"/>
        <end position="88"/>
    </location>
    <ligand>
        <name>AMP</name>
        <dbReference type="ChEBI" id="CHEBI:456215"/>
    </ligand>
</feature>
<feature type="binding site" evidence="1">
    <location>
        <position position="92"/>
    </location>
    <ligand>
        <name>AMP</name>
        <dbReference type="ChEBI" id="CHEBI:456215"/>
    </ligand>
</feature>
<feature type="binding site" evidence="1">
    <location>
        <position position="127"/>
    </location>
    <ligand>
        <name>ATP</name>
        <dbReference type="ChEBI" id="CHEBI:30616"/>
    </ligand>
</feature>
<feature type="binding site" evidence="1">
    <location>
        <position position="130"/>
    </location>
    <ligand>
        <name>Zn(2+)</name>
        <dbReference type="ChEBI" id="CHEBI:29105"/>
        <note>structural</note>
    </ligand>
</feature>
<feature type="binding site" evidence="1">
    <location>
        <position position="133"/>
    </location>
    <ligand>
        <name>Zn(2+)</name>
        <dbReference type="ChEBI" id="CHEBI:29105"/>
        <note>structural</note>
    </ligand>
</feature>
<feature type="binding site" evidence="1">
    <location>
        <begin position="136"/>
        <end position="137"/>
    </location>
    <ligand>
        <name>ATP</name>
        <dbReference type="ChEBI" id="CHEBI:30616"/>
    </ligand>
</feature>
<feature type="binding site" evidence="1">
    <location>
        <position position="150"/>
    </location>
    <ligand>
        <name>Zn(2+)</name>
        <dbReference type="ChEBI" id="CHEBI:29105"/>
        <note>structural</note>
    </ligand>
</feature>
<feature type="binding site" evidence="1">
    <location>
        <position position="153"/>
    </location>
    <ligand>
        <name>Zn(2+)</name>
        <dbReference type="ChEBI" id="CHEBI:29105"/>
        <note>structural</note>
    </ligand>
</feature>
<feature type="binding site" evidence="1">
    <location>
        <position position="160"/>
    </location>
    <ligand>
        <name>AMP</name>
        <dbReference type="ChEBI" id="CHEBI:456215"/>
    </ligand>
</feature>
<feature type="binding site" evidence="1">
    <location>
        <position position="171"/>
    </location>
    <ligand>
        <name>AMP</name>
        <dbReference type="ChEBI" id="CHEBI:456215"/>
    </ligand>
</feature>
<feature type="binding site" evidence="1">
    <location>
        <position position="199"/>
    </location>
    <ligand>
        <name>ATP</name>
        <dbReference type="ChEBI" id="CHEBI:30616"/>
    </ligand>
</feature>